<name>ZFAS1_HUMAN</name>
<gene>
    <name evidence="6" type="primary">ZNF22-AS1</name>
    <name type="synonym">C10orf25</name>
</gene>
<feature type="signal peptide" evidence="1">
    <location>
        <begin position="1"/>
        <end position="28"/>
    </location>
</feature>
<feature type="chain" id="PRO_0000019548" description="Uncharacterized protein ZNF22-AS1">
    <location>
        <begin position="29"/>
        <end position="122"/>
    </location>
</feature>
<feature type="glycosylation site" description="N-linked (GlcNAc...) asparagine" evidence="1">
    <location>
        <position position="49"/>
    </location>
</feature>
<feature type="sequence variant" id="VAR_061603" description="In dbSNP:rs41301609.">
    <original>P</original>
    <variation>L</variation>
    <location>
        <position position="61"/>
    </location>
</feature>
<feature type="sequence variant" id="VAR_047102" description="In dbSNP:rs12269028." evidence="2 3 4">
    <original>I</original>
    <variation>N</variation>
    <location>
        <position position="63"/>
    </location>
</feature>
<reference key="1">
    <citation type="journal article" date="2004" name="Nat. Genet.">
        <title>Complete sequencing and characterization of 21,243 full-length human cDNAs.</title>
        <authorList>
            <person name="Ota T."/>
            <person name="Suzuki Y."/>
            <person name="Nishikawa T."/>
            <person name="Otsuki T."/>
            <person name="Sugiyama T."/>
            <person name="Irie R."/>
            <person name="Wakamatsu A."/>
            <person name="Hayashi K."/>
            <person name="Sato H."/>
            <person name="Nagai K."/>
            <person name="Kimura K."/>
            <person name="Makita H."/>
            <person name="Sekine M."/>
            <person name="Obayashi M."/>
            <person name="Nishi T."/>
            <person name="Shibahara T."/>
            <person name="Tanaka T."/>
            <person name="Ishii S."/>
            <person name="Yamamoto J."/>
            <person name="Saito K."/>
            <person name="Kawai Y."/>
            <person name="Isono Y."/>
            <person name="Nakamura Y."/>
            <person name="Nagahari K."/>
            <person name="Murakami K."/>
            <person name="Yasuda T."/>
            <person name="Iwayanagi T."/>
            <person name="Wagatsuma M."/>
            <person name="Shiratori A."/>
            <person name="Sudo H."/>
            <person name="Hosoiri T."/>
            <person name="Kaku Y."/>
            <person name="Kodaira H."/>
            <person name="Kondo H."/>
            <person name="Sugawara M."/>
            <person name="Takahashi M."/>
            <person name="Kanda K."/>
            <person name="Yokoi T."/>
            <person name="Furuya T."/>
            <person name="Kikkawa E."/>
            <person name="Omura Y."/>
            <person name="Abe K."/>
            <person name="Kamihara K."/>
            <person name="Katsuta N."/>
            <person name="Sato K."/>
            <person name="Tanikawa M."/>
            <person name="Yamazaki M."/>
            <person name="Ninomiya K."/>
            <person name="Ishibashi T."/>
            <person name="Yamashita H."/>
            <person name="Murakawa K."/>
            <person name="Fujimori K."/>
            <person name="Tanai H."/>
            <person name="Kimata M."/>
            <person name="Watanabe M."/>
            <person name="Hiraoka S."/>
            <person name="Chiba Y."/>
            <person name="Ishida S."/>
            <person name="Ono Y."/>
            <person name="Takiguchi S."/>
            <person name="Watanabe S."/>
            <person name="Yosida M."/>
            <person name="Hotuta T."/>
            <person name="Kusano J."/>
            <person name="Kanehori K."/>
            <person name="Takahashi-Fujii A."/>
            <person name="Hara H."/>
            <person name="Tanase T.-O."/>
            <person name="Nomura Y."/>
            <person name="Togiya S."/>
            <person name="Komai F."/>
            <person name="Hara R."/>
            <person name="Takeuchi K."/>
            <person name="Arita M."/>
            <person name="Imose N."/>
            <person name="Musashino K."/>
            <person name="Yuuki H."/>
            <person name="Oshima A."/>
            <person name="Sasaki N."/>
            <person name="Aotsuka S."/>
            <person name="Yoshikawa Y."/>
            <person name="Matsunawa H."/>
            <person name="Ichihara T."/>
            <person name="Shiohata N."/>
            <person name="Sano S."/>
            <person name="Moriya S."/>
            <person name="Momiyama H."/>
            <person name="Satoh N."/>
            <person name="Takami S."/>
            <person name="Terashima Y."/>
            <person name="Suzuki O."/>
            <person name="Nakagawa S."/>
            <person name="Senoh A."/>
            <person name="Mizoguchi H."/>
            <person name="Goto Y."/>
            <person name="Shimizu F."/>
            <person name="Wakebe H."/>
            <person name="Hishigaki H."/>
            <person name="Watanabe T."/>
            <person name="Sugiyama A."/>
            <person name="Takemoto M."/>
            <person name="Kawakami B."/>
            <person name="Yamazaki M."/>
            <person name="Watanabe K."/>
            <person name="Kumagai A."/>
            <person name="Itakura S."/>
            <person name="Fukuzumi Y."/>
            <person name="Fujimori Y."/>
            <person name="Komiyama M."/>
            <person name="Tashiro H."/>
            <person name="Tanigami A."/>
            <person name="Fujiwara T."/>
            <person name="Ono T."/>
            <person name="Yamada K."/>
            <person name="Fujii Y."/>
            <person name="Ozaki K."/>
            <person name="Hirao M."/>
            <person name="Ohmori Y."/>
            <person name="Kawabata A."/>
            <person name="Hikiji T."/>
            <person name="Kobatake N."/>
            <person name="Inagaki H."/>
            <person name="Ikema Y."/>
            <person name="Okamoto S."/>
            <person name="Okitani R."/>
            <person name="Kawakami T."/>
            <person name="Noguchi S."/>
            <person name="Itoh T."/>
            <person name="Shigeta K."/>
            <person name="Senba T."/>
            <person name="Matsumura K."/>
            <person name="Nakajima Y."/>
            <person name="Mizuno T."/>
            <person name="Morinaga M."/>
            <person name="Sasaki M."/>
            <person name="Togashi T."/>
            <person name="Oyama M."/>
            <person name="Hata H."/>
            <person name="Watanabe M."/>
            <person name="Komatsu T."/>
            <person name="Mizushima-Sugano J."/>
            <person name="Satoh T."/>
            <person name="Shirai Y."/>
            <person name="Takahashi Y."/>
            <person name="Nakagawa K."/>
            <person name="Okumura K."/>
            <person name="Nagase T."/>
            <person name="Nomura N."/>
            <person name="Kikuchi H."/>
            <person name="Masuho Y."/>
            <person name="Yamashita R."/>
            <person name="Nakai K."/>
            <person name="Yada T."/>
            <person name="Nakamura Y."/>
            <person name="Ohara O."/>
            <person name="Isogai T."/>
            <person name="Sugano S."/>
        </authorList>
    </citation>
    <scope>NUCLEOTIDE SEQUENCE [LARGE SCALE MRNA]</scope>
    <scope>VARIANT ASN-63</scope>
    <source>
        <tissue>Brain</tissue>
    </source>
</reference>
<reference key="2">
    <citation type="journal article" date="2004" name="Nature">
        <title>The DNA sequence and comparative analysis of human chromosome 10.</title>
        <authorList>
            <person name="Deloukas P."/>
            <person name="Earthrowl M.E."/>
            <person name="Grafham D.V."/>
            <person name="Rubenfield M."/>
            <person name="French L."/>
            <person name="Steward C.A."/>
            <person name="Sims S.K."/>
            <person name="Jones M.C."/>
            <person name="Searle S."/>
            <person name="Scott C."/>
            <person name="Howe K."/>
            <person name="Hunt S.E."/>
            <person name="Andrews T.D."/>
            <person name="Gilbert J.G.R."/>
            <person name="Swarbreck D."/>
            <person name="Ashurst J.L."/>
            <person name="Taylor A."/>
            <person name="Battles J."/>
            <person name="Bird C.P."/>
            <person name="Ainscough R."/>
            <person name="Almeida J.P."/>
            <person name="Ashwell R.I.S."/>
            <person name="Ambrose K.D."/>
            <person name="Babbage A.K."/>
            <person name="Bagguley C.L."/>
            <person name="Bailey J."/>
            <person name="Banerjee R."/>
            <person name="Bates K."/>
            <person name="Beasley H."/>
            <person name="Bray-Allen S."/>
            <person name="Brown A.J."/>
            <person name="Brown J.Y."/>
            <person name="Burford D.C."/>
            <person name="Burrill W."/>
            <person name="Burton J."/>
            <person name="Cahill P."/>
            <person name="Camire D."/>
            <person name="Carter N.P."/>
            <person name="Chapman J.C."/>
            <person name="Clark S.Y."/>
            <person name="Clarke G."/>
            <person name="Clee C.M."/>
            <person name="Clegg S."/>
            <person name="Corby N."/>
            <person name="Coulson A."/>
            <person name="Dhami P."/>
            <person name="Dutta I."/>
            <person name="Dunn M."/>
            <person name="Faulkner L."/>
            <person name="Frankish A."/>
            <person name="Frankland J.A."/>
            <person name="Garner P."/>
            <person name="Garnett J."/>
            <person name="Gribble S."/>
            <person name="Griffiths C."/>
            <person name="Grocock R."/>
            <person name="Gustafson E."/>
            <person name="Hammond S."/>
            <person name="Harley J.L."/>
            <person name="Hart E."/>
            <person name="Heath P.D."/>
            <person name="Ho T.P."/>
            <person name="Hopkins B."/>
            <person name="Horne J."/>
            <person name="Howden P.J."/>
            <person name="Huckle E."/>
            <person name="Hynds C."/>
            <person name="Johnson C."/>
            <person name="Johnson D."/>
            <person name="Kana A."/>
            <person name="Kay M."/>
            <person name="Kimberley A.M."/>
            <person name="Kershaw J.K."/>
            <person name="Kokkinaki M."/>
            <person name="Laird G.K."/>
            <person name="Lawlor S."/>
            <person name="Lee H.M."/>
            <person name="Leongamornlert D.A."/>
            <person name="Laird G."/>
            <person name="Lloyd C."/>
            <person name="Lloyd D.M."/>
            <person name="Loveland J."/>
            <person name="Lovell J."/>
            <person name="McLaren S."/>
            <person name="McLay K.E."/>
            <person name="McMurray A."/>
            <person name="Mashreghi-Mohammadi M."/>
            <person name="Matthews L."/>
            <person name="Milne S."/>
            <person name="Nickerson T."/>
            <person name="Nguyen M."/>
            <person name="Overton-Larty E."/>
            <person name="Palmer S.A."/>
            <person name="Pearce A.V."/>
            <person name="Peck A.I."/>
            <person name="Pelan S."/>
            <person name="Phillimore B."/>
            <person name="Porter K."/>
            <person name="Rice C.M."/>
            <person name="Rogosin A."/>
            <person name="Ross M.T."/>
            <person name="Sarafidou T."/>
            <person name="Sehra H.K."/>
            <person name="Shownkeen R."/>
            <person name="Skuce C.D."/>
            <person name="Smith M."/>
            <person name="Standring L."/>
            <person name="Sycamore N."/>
            <person name="Tester J."/>
            <person name="Thorpe A."/>
            <person name="Torcasso W."/>
            <person name="Tracey A."/>
            <person name="Tromans A."/>
            <person name="Tsolas J."/>
            <person name="Wall M."/>
            <person name="Walsh J."/>
            <person name="Wang H."/>
            <person name="Weinstock K."/>
            <person name="West A.P."/>
            <person name="Willey D.L."/>
            <person name="Whitehead S.L."/>
            <person name="Wilming L."/>
            <person name="Wray P.W."/>
            <person name="Young L."/>
            <person name="Chen Y."/>
            <person name="Lovering R.C."/>
            <person name="Moschonas N.K."/>
            <person name="Siebert R."/>
            <person name="Fechtel K."/>
            <person name="Bentley D."/>
            <person name="Durbin R.M."/>
            <person name="Hubbard T."/>
            <person name="Doucette-Stamm L."/>
            <person name="Beck S."/>
            <person name="Smith D.R."/>
            <person name="Rogers J."/>
        </authorList>
    </citation>
    <scope>NUCLEOTIDE SEQUENCE [LARGE SCALE GENOMIC DNA]</scope>
</reference>
<reference key="3">
    <citation type="submission" date="2005-07" db="EMBL/GenBank/DDBJ databases">
        <authorList>
            <person name="Mural R.J."/>
            <person name="Istrail S."/>
            <person name="Sutton G.G."/>
            <person name="Florea L."/>
            <person name="Halpern A.L."/>
            <person name="Mobarry C.M."/>
            <person name="Lippert R."/>
            <person name="Walenz B."/>
            <person name="Shatkay H."/>
            <person name="Dew I."/>
            <person name="Miller J.R."/>
            <person name="Flanigan M.J."/>
            <person name="Edwards N.J."/>
            <person name="Bolanos R."/>
            <person name="Fasulo D."/>
            <person name="Halldorsson B.V."/>
            <person name="Hannenhalli S."/>
            <person name="Turner R."/>
            <person name="Yooseph S."/>
            <person name="Lu F."/>
            <person name="Nusskern D.R."/>
            <person name="Shue B.C."/>
            <person name="Zheng X.H."/>
            <person name="Zhong F."/>
            <person name="Delcher A.L."/>
            <person name="Huson D.H."/>
            <person name="Kravitz S.A."/>
            <person name="Mouchard L."/>
            <person name="Reinert K."/>
            <person name="Remington K.A."/>
            <person name="Clark A.G."/>
            <person name="Waterman M.S."/>
            <person name="Eichler E.E."/>
            <person name="Adams M.D."/>
            <person name="Hunkapiller M.W."/>
            <person name="Myers E.W."/>
            <person name="Venter J.C."/>
        </authorList>
    </citation>
    <scope>NUCLEOTIDE SEQUENCE [LARGE SCALE GENOMIC DNA]</scope>
    <scope>VARIANT ASN-63</scope>
</reference>
<reference key="4">
    <citation type="journal article" date="2004" name="Genome Res.">
        <title>The status, quality, and expansion of the NIH full-length cDNA project: the Mammalian Gene Collection (MGC).</title>
        <authorList>
            <consortium name="The MGC Project Team"/>
        </authorList>
    </citation>
    <scope>NUCLEOTIDE SEQUENCE [LARGE SCALE MRNA]</scope>
    <scope>VARIANT ASN-63</scope>
</reference>
<evidence type="ECO:0000255" key="1"/>
<evidence type="ECO:0000269" key="2">
    <source>
    </source>
</evidence>
<evidence type="ECO:0000269" key="3">
    <source>
    </source>
</evidence>
<evidence type="ECO:0000269" key="4">
    <source ref="3"/>
</evidence>
<evidence type="ECO:0000305" key="5"/>
<evidence type="ECO:0000312" key="6">
    <source>
        <dbReference type="HGNC" id="HGNC:23509"/>
    </source>
</evidence>
<accession>Q5T742</accession>
<accession>A1L424</accession>
<accession>Q96NM5</accession>
<keyword id="KW-0325">Glycoprotein</keyword>
<keyword id="KW-1185">Reference proteome</keyword>
<keyword id="KW-0964">Secreted</keyword>
<keyword id="KW-0732">Signal</keyword>
<protein>
    <recommendedName>
        <fullName>Uncharacterized protein ZNF22-AS1</fullName>
    </recommendedName>
    <alternativeName>
        <fullName evidence="6">ZNF22 antisense RNA 1</fullName>
    </alternativeName>
</protein>
<organism>
    <name type="scientific">Homo sapiens</name>
    <name type="common">Human</name>
    <dbReference type="NCBI Taxonomy" id="9606"/>
    <lineage>
        <taxon>Eukaryota</taxon>
        <taxon>Metazoa</taxon>
        <taxon>Chordata</taxon>
        <taxon>Craniata</taxon>
        <taxon>Vertebrata</taxon>
        <taxon>Euteleostomi</taxon>
        <taxon>Mammalia</taxon>
        <taxon>Eutheria</taxon>
        <taxon>Euarchontoglires</taxon>
        <taxon>Primates</taxon>
        <taxon>Haplorrhini</taxon>
        <taxon>Catarrhini</taxon>
        <taxon>Hominidae</taxon>
        <taxon>Homo</taxon>
    </lineage>
</organism>
<dbReference type="EMBL" id="AK055129">
    <property type="protein sequence ID" value="BAB70858.1"/>
    <property type="molecule type" value="mRNA"/>
</dbReference>
<dbReference type="EMBL" id="AL353801">
    <property type="status" value="NOT_ANNOTATED_CDS"/>
    <property type="molecule type" value="Genomic_DNA"/>
</dbReference>
<dbReference type="EMBL" id="CH471160">
    <property type="protein sequence ID" value="EAW86630.1"/>
    <property type="molecule type" value="Genomic_DNA"/>
</dbReference>
<dbReference type="EMBL" id="BC130369">
    <property type="protein sequence ID" value="AAI30370.1"/>
    <property type="molecule type" value="mRNA"/>
</dbReference>
<dbReference type="EMBL" id="BC130395">
    <property type="protein sequence ID" value="AAI30396.1"/>
    <property type="molecule type" value="mRNA"/>
</dbReference>
<dbReference type="RefSeq" id="NP_001034469.2">
    <property type="nucleotide sequence ID" value="NM_001039380.3"/>
</dbReference>
<dbReference type="RefSeq" id="XP_016871384.1">
    <property type="nucleotide sequence ID" value="XM_017015895.1"/>
</dbReference>
<dbReference type="BioGRID" id="128668">
    <property type="interactions" value="2"/>
</dbReference>
<dbReference type="IntAct" id="Q5T742">
    <property type="interactions" value="3"/>
</dbReference>
<dbReference type="GlyCosmos" id="Q5T742">
    <property type="glycosylation" value="1 site, No reported glycans"/>
</dbReference>
<dbReference type="GlyGen" id="Q5T742">
    <property type="glycosylation" value="1 site"/>
</dbReference>
<dbReference type="iPTMnet" id="Q5T742"/>
<dbReference type="PhosphoSitePlus" id="Q5T742"/>
<dbReference type="BioMuta" id="HGNC:23509"/>
<dbReference type="PaxDb" id="9606-ENSP00000298298"/>
<dbReference type="DNASU" id="220979"/>
<dbReference type="AGR" id="HGNC:23509"/>
<dbReference type="GeneCards" id="ZNF22-AS1"/>
<dbReference type="HGNC" id="HGNC:23509">
    <property type="gene designation" value="ZNF22-AS1"/>
</dbReference>
<dbReference type="neXtProt" id="NX_Q5T742"/>
<dbReference type="eggNOG" id="ENOG502TEQ4">
    <property type="taxonomic scope" value="Eukaryota"/>
</dbReference>
<dbReference type="InParanoid" id="Q5T742"/>
<dbReference type="PAN-GO" id="Q5T742">
    <property type="GO annotations" value="0 GO annotations based on evolutionary models"/>
</dbReference>
<dbReference type="PhylomeDB" id="Q5T742"/>
<dbReference type="TreeFam" id="TF340712"/>
<dbReference type="PathwayCommons" id="Q5T742"/>
<dbReference type="SignaLink" id="Q5T742"/>
<dbReference type="BioGRID-ORCS" id="220979">
    <property type="hits" value="7 hits in 1125 CRISPR screens"/>
</dbReference>
<dbReference type="GenomeRNAi" id="220979"/>
<dbReference type="Pharos" id="Q5T742">
    <property type="development level" value="Tdark"/>
</dbReference>
<dbReference type="Proteomes" id="UP000005640">
    <property type="component" value="Unplaced"/>
</dbReference>
<dbReference type="RNAct" id="Q5T742">
    <property type="molecule type" value="protein"/>
</dbReference>
<dbReference type="GO" id="GO:0005576">
    <property type="term" value="C:extracellular region"/>
    <property type="evidence" value="ECO:0007669"/>
    <property type="project" value="UniProtKB-SubCell"/>
</dbReference>
<comment type="subcellular location">
    <subcellularLocation>
        <location evidence="5">Secreted</location>
    </subcellularLocation>
</comment>
<comment type="caution">
    <text evidence="5">Product of a dubious CDS prediction.</text>
</comment>
<proteinExistence type="uncertain"/>
<sequence length="122" mass="14441">MVPGPPESVVRFFLWFCFLLPPTRKASCDPRDLKSCNRPCVWSRLLKPNSSLSNLETAYFPQILRFLRPWYFSRSHLNYHQKAPARWEWLYSIYRKGTKAQRRNVLRSPCAPPQPSWPCSVI</sequence>